<evidence type="ECO:0000255" key="1">
    <source>
        <dbReference type="HAMAP-Rule" id="MF_00315"/>
    </source>
</evidence>
<organism>
    <name type="scientific">Synechococcus sp. (strain WH7803)</name>
    <dbReference type="NCBI Taxonomy" id="32051"/>
    <lineage>
        <taxon>Bacteria</taxon>
        <taxon>Bacillati</taxon>
        <taxon>Cyanobacteriota</taxon>
        <taxon>Cyanophyceae</taxon>
        <taxon>Synechococcales</taxon>
        <taxon>Synechococcaceae</taxon>
        <taxon>Synechococcus</taxon>
    </lineage>
</organism>
<accession>A5GL34</accession>
<proteinExistence type="inferred from homology"/>
<name>DXS_SYNPW</name>
<dbReference type="EC" id="2.2.1.7" evidence="1"/>
<dbReference type="EMBL" id="CT971583">
    <property type="protein sequence ID" value="CAK23649.1"/>
    <property type="molecule type" value="Genomic_DNA"/>
</dbReference>
<dbReference type="SMR" id="A5GL34"/>
<dbReference type="STRING" id="32051.SynWH7803_1223"/>
<dbReference type="KEGG" id="syx:SynWH7803_1223"/>
<dbReference type="eggNOG" id="COG1154">
    <property type="taxonomic scope" value="Bacteria"/>
</dbReference>
<dbReference type="HOGENOM" id="CLU_009227_1_4_3"/>
<dbReference type="OrthoDB" id="9803371at2"/>
<dbReference type="UniPathway" id="UPA00064">
    <property type="reaction ID" value="UER00091"/>
</dbReference>
<dbReference type="Proteomes" id="UP000001566">
    <property type="component" value="Chromosome"/>
</dbReference>
<dbReference type="GO" id="GO:0005829">
    <property type="term" value="C:cytosol"/>
    <property type="evidence" value="ECO:0007669"/>
    <property type="project" value="TreeGrafter"/>
</dbReference>
<dbReference type="GO" id="GO:0008661">
    <property type="term" value="F:1-deoxy-D-xylulose-5-phosphate synthase activity"/>
    <property type="evidence" value="ECO:0007669"/>
    <property type="project" value="UniProtKB-UniRule"/>
</dbReference>
<dbReference type="GO" id="GO:0000287">
    <property type="term" value="F:magnesium ion binding"/>
    <property type="evidence" value="ECO:0007669"/>
    <property type="project" value="UniProtKB-UniRule"/>
</dbReference>
<dbReference type="GO" id="GO:0030976">
    <property type="term" value="F:thiamine pyrophosphate binding"/>
    <property type="evidence" value="ECO:0007669"/>
    <property type="project" value="UniProtKB-UniRule"/>
</dbReference>
<dbReference type="GO" id="GO:0052865">
    <property type="term" value="P:1-deoxy-D-xylulose 5-phosphate biosynthetic process"/>
    <property type="evidence" value="ECO:0007669"/>
    <property type="project" value="UniProtKB-UniPathway"/>
</dbReference>
<dbReference type="GO" id="GO:0019288">
    <property type="term" value="P:isopentenyl diphosphate biosynthetic process, methylerythritol 4-phosphate pathway"/>
    <property type="evidence" value="ECO:0007669"/>
    <property type="project" value="TreeGrafter"/>
</dbReference>
<dbReference type="GO" id="GO:0016114">
    <property type="term" value="P:terpenoid biosynthetic process"/>
    <property type="evidence" value="ECO:0007669"/>
    <property type="project" value="UniProtKB-UniRule"/>
</dbReference>
<dbReference type="GO" id="GO:0009228">
    <property type="term" value="P:thiamine biosynthetic process"/>
    <property type="evidence" value="ECO:0007669"/>
    <property type="project" value="UniProtKB-UniRule"/>
</dbReference>
<dbReference type="CDD" id="cd02007">
    <property type="entry name" value="TPP_DXS"/>
    <property type="match status" value="1"/>
</dbReference>
<dbReference type="CDD" id="cd07033">
    <property type="entry name" value="TPP_PYR_DXS_TK_like"/>
    <property type="match status" value="1"/>
</dbReference>
<dbReference type="FunFam" id="3.40.50.920:FF:000002">
    <property type="entry name" value="1-deoxy-D-xylulose-5-phosphate synthase"/>
    <property type="match status" value="1"/>
</dbReference>
<dbReference type="FunFam" id="3.40.50.970:FF:000005">
    <property type="entry name" value="1-deoxy-D-xylulose-5-phosphate synthase"/>
    <property type="match status" value="1"/>
</dbReference>
<dbReference type="Gene3D" id="3.40.50.920">
    <property type="match status" value="1"/>
</dbReference>
<dbReference type="Gene3D" id="3.40.50.970">
    <property type="match status" value="2"/>
</dbReference>
<dbReference type="HAMAP" id="MF_00315">
    <property type="entry name" value="DXP_synth"/>
    <property type="match status" value="1"/>
</dbReference>
<dbReference type="InterPro" id="IPR005477">
    <property type="entry name" value="Dxylulose-5-P_synthase"/>
</dbReference>
<dbReference type="InterPro" id="IPR029061">
    <property type="entry name" value="THDP-binding"/>
</dbReference>
<dbReference type="InterPro" id="IPR009014">
    <property type="entry name" value="Transketo_C/PFOR_II"/>
</dbReference>
<dbReference type="InterPro" id="IPR005475">
    <property type="entry name" value="Transketolase-like_Pyr-bd"/>
</dbReference>
<dbReference type="InterPro" id="IPR020826">
    <property type="entry name" value="Transketolase_BS"/>
</dbReference>
<dbReference type="InterPro" id="IPR033248">
    <property type="entry name" value="Transketolase_C"/>
</dbReference>
<dbReference type="InterPro" id="IPR049557">
    <property type="entry name" value="Transketolase_CS"/>
</dbReference>
<dbReference type="NCBIfam" id="TIGR00204">
    <property type="entry name" value="dxs"/>
    <property type="match status" value="1"/>
</dbReference>
<dbReference type="NCBIfam" id="NF003933">
    <property type="entry name" value="PRK05444.2-2"/>
    <property type="match status" value="1"/>
</dbReference>
<dbReference type="PANTHER" id="PTHR43322">
    <property type="entry name" value="1-D-DEOXYXYLULOSE 5-PHOSPHATE SYNTHASE-RELATED"/>
    <property type="match status" value="1"/>
</dbReference>
<dbReference type="PANTHER" id="PTHR43322:SF5">
    <property type="entry name" value="1-DEOXY-D-XYLULOSE-5-PHOSPHATE SYNTHASE, CHLOROPLASTIC"/>
    <property type="match status" value="1"/>
</dbReference>
<dbReference type="Pfam" id="PF13292">
    <property type="entry name" value="DXP_synthase_N"/>
    <property type="match status" value="1"/>
</dbReference>
<dbReference type="Pfam" id="PF02779">
    <property type="entry name" value="Transket_pyr"/>
    <property type="match status" value="1"/>
</dbReference>
<dbReference type="Pfam" id="PF02780">
    <property type="entry name" value="Transketolase_C"/>
    <property type="match status" value="1"/>
</dbReference>
<dbReference type="SMART" id="SM00861">
    <property type="entry name" value="Transket_pyr"/>
    <property type="match status" value="1"/>
</dbReference>
<dbReference type="SUPFAM" id="SSF52518">
    <property type="entry name" value="Thiamin diphosphate-binding fold (THDP-binding)"/>
    <property type="match status" value="2"/>
</dbReference>
<dbReference type="SUPFAM" id="SSF52922">
    <property type="entry name" value="TK C-terminal domain-like"/>
    <property type="match status" value="1"/>
</dbReference>
<dbReference type="PROSITE" id="PS00801">
    <property type="entry name" value="TRANSKETOLASE_1"/>
    <property type="match status" value="1"/>
</dbReference>
<dbReference type="PROSITE" id="PS00802">
    <property type="entry name" value="TRANSKETOLASE_2"/>
    <property type="match status" value="1"/>
</dbReference>
<comment type="function">
    <text evidence="1">Catalyzes the acyloin condensation reaction between C atoms 2 and 3 of pyruvate and glyceraldehyde 3-phosphate to yield 1-deoxy-D-xylulose-5-phosphate (DXP).</text>
</comment>
<comment type="catalytic activity">
    <reaction evidence="1">
        <text>D-glyceraldehyde 3-phosphate + pyruvate + H(+) = 1-deoxy-D-xylulose 5-phosphate + CO2</text>
        <dbReference type="Rhea" id="RHEA:12605"/>
        <dbReference type="ChEBI" id="CHEBI:15361"/>
        <dbReference type="ChEBI" id="CHEBI:15378"/>
        <dbReference type="ChEBI" id="CHEBI:16526"/>
        <dbReference type="ChEBI" id="CHEBI:57792"/>
        <dbReference type="ChEBI" id="CHEBI:59776"/>
        <dbReference type="EC" id="2.2.1.7"/>
    </reaction>
</comment>
<comment type="cofactor">
    <cofactor evidence="1">
        <name>Mg(2+)</name>
        <dbReference type="ChEBI" id="CHEBI:18420"/>
    </cofactor>
    <text evidence="1">Binds 1 Mg(2+) ion per subunit.</text>
</comment>
<comment type="cofactor">
    <cofactor evidence="1">
        <name>thiamine diphosphate</name>
        <dbReference type="ChEBI" id="CHEBI:58937"/>
    </cofactor>
    <text evidence="1">Binds 1 thiamine pyrophosphate per subunit.</text>
</comment>
<comment type="pathway">
    <text evidence="1">Metabolic intermediate biosynthesis; 1-deoxy-D-xylulose 5-phosphate biosynthesis; 1-deoxy-D-xylulose 5-phosphate from D-glyceraldehyde 3-phosphate and pyruvate: step 1/1.</text>
</comment>
<comment type="subunit">
    <text evidence="1">Homodimer.</text>
</comment>
<comment type="similarity">
    <text evidence="1">Belongs to the transketolase family. DXPS subfamily.</text>
</comment>
<protein>
    <recommendedName>
        <fullName evidence="1">1-deoxy-D-xylulose-5-phosphate synthase</fullName>
        <ecNumber evidence="1">2.2.1.7</ecNumber>
    </recommendedName>
    <alternativeName>
        <fullName evidence="1">1-deoxyxylulose-5-phosphate synthase</fullName>
        <shortName evidence="1">DXP synthase</shortName>
        <shortName evidence="1">DXPS</shortName>
    </alternativeName>
</protein>
<sequence>MHLSDLAHPNELHGLSVAELQDVAKQIRERHLEVVSNSGGHLGPGLGVVELTLALYQTLDLDKDRVVWDVGHQAYPHKLITGRYADFDSLRQQGGVAGYLKRCESEFDHFGAGHASTSISAALGMAMARDRQGLDYKCVAVIGDGALTGGMALEAINHAGHMPNTPLLVVLNDNDMSISPPVGALSSHLNRMRLSPPMQFLSGSVEESMRHLPFMGGDLPPELNRLKESMRRLAVPKVGAVFEELGFTYMGPIDGHDMGEMIRTFQAAHRIGGPALVHVITKKGKGYPYAEADQVGYHAQSAFDLGTGKARPSKTPKPPSYSKVFGQTLVKICEQNSKVVGITAAMATGTGLDLLQKALPDQYVDVGIAEQHAVTLAAGMACDGLRPVVAIYSTFLQRAFDQMIHDVGIQNLPVTFVLDRAGIVGADGPTHQGQYDISYLRAIPNFTVMAPKDEAELQRMLVSSLQHSGPCAIRIPRGPGEGVPLMEEGWEPLPIGRGEVLRDGDDLLIVAYGAMNSKALATADLLASCGVQSTVVNARFLRPLDDELLHPLARRIGKVVTIEEGTLAGGFGSALTESLLDADIKPSILRLGIPDVLVDHATPQQSFEKLGLTPAQMAESIQGFLQRSKLTTATSVVQQPSVSVLES</sequence>
<keyword id="KW-0414">Isoprene biosynthesis</keyword>
<keyword id="KW-0460">Magnesium</keyword>
<keyword id="KW-0479">Metal-binding</keyword>
<keyword id="KW-1185">Reference proteome</keyword>
<keyword id="KW-0784">Thiamine biosynthesis</keyword>
<keyword id="KW-0786">Thiamine pyrophosphate</keyword>
<keyword id="KW-0808">Transferase</keyword>
<gene>
    <name evidence="1" type="primary">dxs</name>
    <name type="ordered locus">SynWH7803_1223</name>
</gene>
<reference key="1">
    <citation type="submission" date="2006-05" db="EMBL/GenBank/DDBJ databases">
        <authorList>
            <consortium name="Genoscope"/>
        </authorList>
    </citation>
    <scope>NUCLEOTIDE SEQUENCE [LARGE SCALE GENOMIC DNA]</scope>
    <source>
        <strain>WH7803</strain>
    </source>
</reference>
<feature type="chain" id="PRO_1000019084" description="1-deoxy-D-xylulose-5-phosphate synthase">
    <location>
        <begin position="1"/>
        <end position="647"/>
    </location>
</feature>
<feature type="binding site" evidence="1">
    <location>
        <position position="72"/>
    </location>
    <ligand>
        <name>thiamine diphosphate</name>
        <dbReference type="ChEBI" id="CHEBI:58937"/>
    </ligand>
</feature>
<feature type="binding site" evidence="1">
    <location>
        <begin position="113"/>
        <end position="115"/>
    </location>
    <ligand>
        <name>thiamine diphosphate</name>
        <dbReference type="ChEBI" id="CHEBI:58937"/>
    </ligand>
</feature>
<feature type="binding site" evidence="1">
    <location>
        <position position="144"/>
    </location>
    <ligand>
        <name>Mg(2+)</name>
        <dbReference type="ChEBI" id="CHEBI:18420"/>
    </ligand>
</feature>
<feature type="binding site" evidence="1">
    <location>
        <begin position="145"/>
        <end position="146"/>
    </location>
    <ligand>
        <name>thiamine diphosphate</name>
        <dbReference type="ChEBI" id="CHEBI:58937"/>
    </ligand>
</feature>
<feature type="binding site" evidence="1">
    <location>
        <position position="174"/>
    </location>
    <ligand>
        <name>Mg(2+)</name>
        <dbReference type="ChEBI" id="CHEBI:18420"/>
    </ligand>
</feature>
<feature type="binding site" evidence="1">
    <location>
        <position position="174"/>
    </location>
    <ligand>
        <name>thiamine diphosphate</name>
        <dbReference type="ChEBI" id="CHEBI:58937"/>
    </ligand>
</feature>
<feature type="binding site" evidence="1">
    <location>
        <position position="287"/>
    </location>
    <ligand>
        <name>thiamine diphosphate</name>
        <dbReference type="ChEBI" id="CHEBI:58937"/>
    </ligand>
</feature>
<feature type="binding site" evidence="1">
    <location>
        <position position="370"/>
    </location>
    <ligand>
        <name>thiamine diphosphate</name>
        <dbReference type="ChEBI" id="CHEBI:58937"/>
    </ligand>
</feature>